<keyword id="KW-0418">Kinase</keyword>
<keyword id="KW-0547">Nucleotide-binding</keyword>
<keyword id="KW-0723">Serine/threonine-protein kinase</keyword>
<keyword id="KW-0808">Transferase</keyword>
<comment type="function">
    <text evidence="1">Bifunctional serine/threonine kinase and phosphorylase involved in the regulation of the phosphoenolpyruvate synthase (PEPS) by catalyzing its phosphorylation/dephosphorylation.</text>
</comment>
<comment type="catalytic activity">
    <reaction evidence="1">
        <text>[pyruvate, water dikinase] + ADP = [pyruvate, water dikinase]-phosphate + AMP + H(+)</text>
        <dbReference type="Rhea" id="RHEA:46020"/>
        <dbReference type="Rhea" id="RHEA-COMP:11425"/>
        <dbReference type="Rhea" id="RHEA-COMP:11426"/>
        <dbReference type="ChEBI" id="CHEBI:15378"/>
        <dbReference type="ChEBI" id="CHEBI:43176"/>
        <dbReference type="ChEBI" id="CHEBI:68546"/>
        <dbReference type="ChEBI" id="CHEBI:456215"/>
        <dbReference type="ChEBI" id="CHEBI:456216"/>
        <dbReference type="EC" id="2.7.11.33"/>
    </reaction>
</comment>
<comment type="catalytic activity">
    <reaction evidence="1">
        <text>[pyruvate, water dikinase]-phosphate + phosphate + H(+) = [pyruvate, water dikinase] + diphosphate</text>
        <dbReference type="Rhea" id="RHEA:48580"/>
        <dbReference type="Rhea" id="RHEA-COMP:11425"/>
        <dbReference type="Rhea" id="RHEA-COMP:11426"/>
        <dbReference type="ChEBI" id="CHEBI:15378"/>
        <dbReference type="ChEBI" id="CHEBI:33019"/>
        <dbReference type="ChEBI" id="CHEBI:43176"/>
        <dbReference type="ChEBI" id="CHEBI:43474"/>
        <dbReference type="ChEBI" id="CHEBI:68546"/>
        <dbReference type="EC" id="2.7.4.28"/>
    </reaction>
</comment>
<comment type="similarity">
    <text evidence="1">Belongs to the pyruvate, phosphate/water dikinase regulatory protein family. PSRP subfamily.</text>
</comment>
<gene>
    <name type="ordered locus">VV2_0006</name>
</gene>
<dbReference type="EC" id="2.7.11.33" evidence="1"/>
<dbReference type="EC" id="2.7.4.28" evidence="1"/>
<dbReference type="EMBL" id="AE016796">
    <property type="protein sequence ID" value="AAO06986.1"/>
    <property type="molecule type" value="Genomic_DNA"/>
</dbReference>
<dbReference type="RefSeq" id="WP_011081001.1">
    <property type="nucleotide sequence ID" value="NC_004460.2"/>
</dbReference>
<dbReference type="SMR" id="Q8D7Y9"/>
<dbReference type="KEGG" id="vvu:VV2_0006"/>
<dbReference type="HOGENOM" id="CLU_046206_1_0_6"/>
<dbReference type="Proteomes" id="UP000002275">
    <property type="component" value="Chromosome 2"/>
</dbReference>
<dbReference type="GO" id="GO:0043531">
    <property type="term" value="F:ADP binding"/>
    <property type="evidence" value="ECO:0007669"/>
    <property type="project" value="UniProtKB-UniRule"/>
</dbReference>
<dbReference type="GO" id="GO:0005524">
    <property type="term" value="F:ATP binding"/>
    <property type="evidence" value="ECO:0007669"/>
    <property type="project" value="InterPro"/>
</dbReference>
<dbReference type="GO" id="GO:0016776">
    <property type="term" value="F:phosphotransferase activity, phosphate group as acceptor"/>
    <property type="evidence" value="ECO:0007669"/>
    <property type="project" value="UniProtKB-UniRule"/>
</dbReference>
<dbReference type="GO" id="GO:0004674">
    <property type="term" value="F:protein serine/threonine kinase activity"/>
    <property type="evidence" value="ECO:0007669"/>
    <property type="project" value="UniProtKB-UniRule"/>
</dbReference>
<dbReference type="HAMAP" id="MF_01062">
    <property type="entry name" value="PSRP"/>
    <property type="match status" value="1"/>
</dbReference>
<dbReference type="InterPro" id="IPR005177">
    <property type="entry name" value="Kinase-pyrophosphorylase"/>
</dbReference>
<dbReference type="InterPro" id="IPR026530">
    <property type="entry name" value="PSRP"/>
</dbReference>
<dbReference type="NCBIfam" id="NF003742">
    <property type="entry name" value="PRK05339.1"/>
    <property type="match status" value="1"/>
</dbReference>
<dbReference type="PANTHER" id="PTHR31756">
    <property type="entry name" value="PYRUVATE, PHOSPHATE DIKINASE REGULATORY PROTEIN 1, CHLOROPLASTIC"/>
    <property type="match status" value="1"/>
</dbReference>
<dbReference type="PANTHER" id="PTHR31756:SF3">
    <property type="entry name" value="PYRUVATE, PHOSPHATE DIKINASE REGULATORY PROTEIN 1, CHLOROPLASTIC"/>
    <property type="match status" value="1"/>
</dbReference>
<dbReference type="Pfam" id="PF03618">
    <property type="entry name" value="Kinase-PPPase"/>
    <property type="match status" value="1"/>
</dbReference>
<protein>
    <recommendedName>
        <fullName evidence="1">Putative phosphoenolpyruvate synthase regulatory protein</fullName>
        <shortName evidence="1">PEP synthase regulatory protein</shortName>
        <shortName evidence="1">PSRP</shortName>
        <ecNumber evidence="1">2.7.11.33</ecNumber>
        <ecNumber evidence="1">2.7.4.28</ecNumber>
    </recommendedName>
    <alternativeName>
        <fullName evidence="1">Pyruvate, water dikinase regulatory protein</fullName>
    </alternativeName>
</protein>
<accession>Q8D7Y9</accession>
<organism>
    <name type="scientific">Vibrio vulnificus (strain CMCP6)</name>
    <dbReference type="NCBI Taxonomy" id="216895"/>
    <lineage>
        <taxon>Bacteria</taxon>
        <taxon>Pseudomonadati</taxon>
        <taxon>Pseudomonadota</taxon>
        <taxon>Gammaproteobacteria</taxon>
        <taxon>Vibrionales</taxon>
        <taxon>Vibrionaceae</taxon>
        <taxon>Vibrio</taxon>
    </lineage>
</organism>
<feature type="chain" id="PRO_0000196738" description="Putative phosphoenolpyruvate synthase regulatory protein">
    <location>
        <begin position="1"/>
        <end position="277"/>
    </location>
</feature>
<feature type="binding site" evidence="1">
    <location>
        <begin position="157"/>
        <end position="164"/>
    </location>
    <ligand>
        <name>ADP</name>
        <dbReference type="ChEBI" id="CHEBI:456216"/>
    </ligand>
</feature>
<evidence type="ECO:0000255" key="1">
    <source>
        <dbReference type="HAMAP-Rule" id="MF_01062"/>
    </source>
</evidence>
<proteinExistence type="inferred from homology"/>
<reference key="1">
    <citation type="submission" date="2002-12" db="EMBL/GenBank/DDBJ databases">
        <title>Complete genome sequence of Vibrio vulnificus CMCP6.</title>
        <authorList>
            <person name="Rhee J.H."/>
            <person name="Kim S.Y."/>
            <person name="Chung S.S."/>
            <person name="Kim J.J."/>
            <person name="Moon Y.H."/>
            <person name="Jeong H."/>
            <person name="Choy H.E."/>
        </authorList>
    </citation>
    <scope>NUCLEOTIDE SEQUENCE [LARGE SCALE GENOMIC DNA]</scope>
    <source>
        <strain>CMCP6</strain>
    </source>
</reference>
<name>PSRP_VIBVU</name>
<sequence length="277" mass="31572">MQTEKQSRDVFYVSDGTAITCETLGHVVLGQFPFVANEKTFPFVESEEKLTELIKHIEISFQTNGIKPLVFFSLVLPDLKARLMESPAYCYDVLESIVQRVKDDIQMEPTPKLQRSRSVGKDTDTYFDRIAAIEYTLAHDDGISLKGLELADIILLGVSRSGKTPTSLYMAMQFGLRVVNYPYIDDDIKGLKLLPEFEIHRHKLFGLTIDPERLTEIRENRLAGSDYASTEQCQHELANVEALFRREAIPYINTTSLSVEEISTRVLEKTGLKRRLF</sequence>